<proteinExistence type="evidence at protein level"/>
<comment type="function">
    <text evidence="4 5">Acts as a mediator between the cap-binding complex (CBC) and the primary microRNAs (miRNAs) processing machinery during cell proliferation. Contributes to the stability and delivery of capped primary miRNA transcripts to the primary miRNA processing complex containing DGCR8 and DROSHA, thereby playing a role in RNA-mediated gene silencing (RNAi) by miRNAs. Binds capped RNAs (m7GpppG-capped RNA); however interaction is probably mediated via its interaction with NCBP1/CBP80 component of the CBC complex. Involved in cell cycle progression at S phase. Does not directly confer arsenite resistance but rather modulates arsenic sensitivity. Independently of its activity on miRNAs, necessary and sufficient to promote neural stem cell self-renewal. Does so by directly binding SOX2 promoter and positively regulating its transcription.</text>
</comment>
<comment type="subunit">
    <text evidence="1 4">Interacts with CASP8AP2 and ERBB4 (By similarity). Interacts with NCBP1/CBP80 and DROSHA (PubMed:19632182). Interacts with LUZP4 (By similarity). Interacts with NCBP2/CBP20 and NCBP3 (By similarity). Interacts with MTREX (By similarity).</text>
</comment>
<comment type="subcellular location">
    <subcellularLocation>
        <location>Nucleus</location>
        <location>Nucleoplasm</location>
    </subcellularLocation>
    <subcellularLocation>
        <location>Cytoplasm</location>
    </subcellularLocation>
    <text>Predominantly nuclear. Shuttles between the nucleus and the cytoplasm in a CRM1-dependent way.</text>
</comment>
<comment type="alternative products">
    <event type="alternative splicing"/>
    <isoform>
        <id>Q99MR6-1</id>
        <name>A</name>
        <sequence type="displayed"/>
    </isoform>
    <isoform>
        <id>Q99MR6-2</id>
        <name>B</name>
        <sequence type="described" ref="VSP_000325"/>
    </isoform>
    <isoform>
        <id>Q99MR6-3</id>
        <name>C</name>
        <sequence type="described" ref="VSP_000325 VSP_000326"/>
    </isoform>
    <isoform>
        <id>Q99MR6-4</id>
        <name>D</name>
        <sequence type="described" ref="VSP_000326"/>
    </isoform>
</comment>
<comment type="tissue specificity">
    <text evidence="3 4 5">Widely expressed, with a preference for proliferating cells. Highly expressed in hematopoietic tissues and reduced or absent expression in parenchymal organs like liver and kidney. In the brain, expressed in the subventricular zone by niche astrocytes, ependymal cells and neural stem cells. In this cerebral context, expressed in slowly dividing cells.</text>
</comment>
<comment type="induction">
    <text evidence="4">Upon cell proliferation.</text>
</comment>
<comment type="disruption phenotype">
    <text evidence="3 4">Death around the time of implantation. Deletion in adults leads to proliferative arrest and bone marrow hypoplasia whereas parenchymal organs composed of nonproliferating cells are unaffected.</text>
</comment>
<comment type="similarity">
    <text evidence="8">Belongs to the ARS2 family.</text>
</comment>
<comment type="sequence caution" evidence="8">
    <conflict type="erroneous initiation">
        <sequence resource="EMBL-CDS" id="AAH19117"/>
    </conflict>
    <text>Truncated N-terminus.</text>
</comment>
<comment type="sequence caution" evidence="8">
    <conflict type="erroneous initiation">
        <sequence resource="EMBL-CDS" id="BAE29458"/>
    </conflict>
    <text>Truncated N-terminus.</text>
</comment>
<dbReference type="EMBL" id="AF312033">
    <property type="protein sequence ID" value="AAK28817.1"/>
    <property type="molecule type" value="Genomic_DNA"/>
</dbReference>
<dbReference type="EMBL" id="AF312033">
    <property type="protein sequence ID" value="AAK28818.1"/>
    <property type="molecule type" value="Genomic_DNA"/>
</dbReference>
<dbReference type="EMBL" id="AF312033">
    <property type="protein sequence ID" value="AAK28819.1"/>
    <property type="molecule type" value="Genomic_DNA"/>
</dbReference>
<dbReference type="EMBL" id="AF312033">
    <property type="protein sequence ID" value="AAK28820.1"/>
    <property type="molecule type" value="Genomic_DNA"/>
</dbReference>
<dbReference type="EMBL" id="BC019117">
    <property type="protein sequence ID" value="AAH19117.1"/>
    <property type="status" value="ALT_INIT"/>
    <property type="molecule type" value="mRNA"/>
</dbReference>
<dbReference type="EMBL" id="BC066831">
    <property type="protein sequence ID" value="AAH66831.1"/>
    <property type="molecule type" value="mRNA"/>
</dbReference>
<dbReference type="EMBL" id="AK150310">
    <property type="protein sequence ID" value="BAE29458.1"/>
    <property type="status" value="ALT_INIT"/>
    <property type="molecule type" value="mRNA"/>
</dbReference>
<dbReference type="CCDS" id="CCDS39331.1">
    <molecule id="Q99MR6-1"/>
</dbReference>
<dbReference type="CCDS" id="CCDS80439.1">
    <molecule id="Q99MR6-3"/>
</dbReference>
<dbReference type="CCDS" id="CCDS80440.1">
    <molecule id="Q99MR6-4"/>
</dbReference>
<dbReference type="RefSeq" id="NP_001103379.1">
    <molecule id="Q99MR6-4"/>
    <property type="nucleotide sequence ID" value="NM_001109909.1"/>
</dbReference>
<dbReference type="RefSeq" id="NP_001103380.1">
    <molecule id="Q99MR6-3"/>
    <property type="nucleotide sequence ID" value="NM_001109910.1"/>
</dbReference>
<dbReference type="RefSeq" id="NP_001346531.1">
    <molecule id="Q99MR6-2"/>
    <property type="nucleotide sequence ID" value="NM_001359602.1"/>
</dbReference>
<dbReference type="RefSeq" id="NP_113582.1">
    <molecule id="Q99MR6-1"/>
    <property type="nucleotide sequence ID" value="NM_031405.2"/>
</dbReference>
<dbReference type="RefSeq" id="XP_006504692.1">
    <property type="nucleotide sequence ID" value="XM_006504629.1"/>
</dbReference>
<dbReference type="SMR" id="Q99MR6"/>
<dbReference type="BioGRID" id="219965">
    <property type="interactions" value="18"/>
</dbReference>
<dbReference type="FunCoup" id="Q99MR6">
    <property type="interactions" value="4580"/>
</dbReference>
<dbReference type="IntAct" id="Q99MR6">
    <property type="interactions" value="2"/>
</dbReference>
<dbReference type="MINT" id="Q99MR6"/>
<dbReference type="STRING" id="10090.ENSMUSP00000043123"/>
<dbReference type="GlyGen" id="Q99MR6">
    <property type="glycosylation" value="1 site, 1 O-linked glycan (1 site)"/>
</dbReference>
<dbReference type="iPTMnet" id="Q99MR6"/>
<dbReference type="PhosphoSitePlus" id="Q99MR6"/>
<dbReference type="SwissPalm" id="Q99MR6"/>
<dbReference type="jPOST" id="Q99MR6"/>
<dbReference type="PaxDb" id="10090-ENSMUSP00000043123"/>
<dbReference type="PeptideAtlas" id="Q99MR6"/>
<dbReference type="ProteomicsDB" id="258608">
    <molecule id="Q99MR6-1"/>
</dbReference>
<dbReference type="ProteomicsDB" id="258609">
    <molecule id="Q99MR6-2"/>
</dbReference>
<dbReference type="ProteomicsDB" id="258610">
    <molecule id="Q99MR6-3"/>
</dbReference>
<dbReference type="ProteomicsDB" id="258611">
    <molecule id="Q99MR6-4"/>
</dbReference>
<dbReference type="Pumba" id="Q99MR6"/>
<dbReference type="Antibodypedia" id="30897">
    <property type="antibodies" value="160 antibodies from 27 providers"/>
</dbReference>
<dbReference type="DNASU" id="83701"/>
<dbReference type="Ensembl" id="ENSMUST00000197466.5">
    <molecule id="Q99MR6-3"/>
    <property type="protein sequence ID" value="ENSMUSP00000142564.2"/>
    <property type="gene ID" value="ENSMUSG00000037364.14"/>
</dbReference>
<dbReference type="Ensembl" id="ENSMUST00000199243.5">
    <molecule id="Q99MR6-4"/>
    <property type="protein sequence ID" value="ENSMUSP00000143232.2"/>
    <property type="gene ID" value="ENSMUSG00000037364.14"/>
</dbReference>
<dbReference type="GeneID" id="83701"/>
<dbReference type="KEGG" id="mmu:83701"/>
<dbReference type="UCSC" id="uc009acb.2">
    <molecule id="Q99MR6-1"/>
    <property type="organism name" value="mouse"/>
</dbReference>
<dbReference type="UCSC" id="uc009acc.2">
    <molecule id="Q99MR6-3"/>
    <property type="organism name" value="mouse"/>
</dbReference>
<dbReference type="UCSC" id="uc012eew.1">
    <molecule id="Q99MR6-4"/>
    <property type="organism name" value="mouse"/>
</dbReference>
<dbReference type="AGR" id="MGI:1933527"/>
<dbReference type="CTD" id="51593"/>
<dbReference type="MGI" id="MGI:1933527">
    <property type="gene designation" value="Srrt"/>
</dbReference>
<dbReference type="VEuPathDB" id="HostDB:ENSMUSG00000037364"/>
<dbReference type="eggNOG" id="KOG2295">
    <property type="taxonomic scope" value="Eukaryota"/>
</dbReference>
<dbReference type="GeneTree" id="ENSGT00390000005492"/>
<dbReference type="InParanoid" id="Q99MR6"/>
<dbReference type="OMA" id="FEDKIMQ"/>
<dbReference type="OrthoDB" id="342064at2759"/>
<dbReference type="PhylomeDB" id="Q99MR6"/>
<dbReference type="TreeFam" id="TF317609"/>
<dbReference type="Reactome" id="R-MMU-6807505">
    <property type="pathway name" value="RNA polymerase II transcribes snRNA genes"/>
</dbReference>
<dbReference type="Reactome" id="R-MMU-72163">
    <property type="pathway name" value="mRNA Splicing - Major Pathway"/>
</dbReference>
<dbReference type="BioGRID-ORCS" id="83701">
    <property type="hits" value="22 hits in 80 CRISPR screens"/>
</dbReference>
<dbReference type="ChiTaRS" id="Srrt">
    <property type="organism name" value="mouse"/>
</dbReference>
<dbReference type="PRO" id="PR:Q99MR6"/>
<dbReference type="Proteomes" id="UP000000589">
    <property type="component" value="Chromosome 5"/>
</dbReference>
<dbReference type="RNAct" id="Q99MR6">
    <property type="molecule type" value="protein"/>
</dbReference>
<dbReference type="Bgee" id="ENSMUSG00000037364">
    <property type="expression patterns" value="Expressed in retinal neural layer and 64 other cell types or tissues"/>
</dbReference>
<dbReference type="ExpressionAtlas" id="Q99MR6">
    <property type="expression patterns" value="baseline and differential"/>
</dbReference>
<dbReference type="GO" id="GO:0005737">
    <property type="term" value="C:cytoplasm"/>
    <property type="evidence" value="ECO:0000314"/>
    <property type="project" value="UniProtKB"/>
</dbReference>
<dbReference type="GO" id="GO:0005654">
    <property type="term" value="C:nucleoplasm"/>
    <property type="evidence" value="ECO:0000314"/>
    <property type="project" value="UniProtKB"/>
</dbReference>
<dbReference type="GO" id="GO:1990904">
    <property type="term" value="C:ribonucleoprotein complex"/>
    <property type="evidence" value="ECO:0007669"/>
    <property type="project" value="Ensembl"/>
</dbReference>
<dbReference type="GO" id="GO:0003677">
    <property type="term" value="F:DNA binding"/>
    <property type="evidence" value="ECO:0000314"/>
    <property type="project" value="UniProtKB"/>
</dbReference>
<dbReference type="GO" id="GO:0140262">
    <property type="term" value="F:mRNA cap binding complex binding"/>
    <property type="evidence" value="ECO:0007669"/>
    <property type="project" value="Ensembl"/>
</dbReference>
<dbReference type="GO" id="GO:0030674">
    <property type="term" value="F:protein-macromolecule adaptor activity"/>
    <property type="evidence" value="ECO:0007669"/>
    <property type="project" value="Ensembl"/>
</dbReference>
<dbReference type="GO" id="GO:0097150">
    <property type="term" value="P:neuronal stem cell population maintenance"/>
    <property type="evidence" value="ECO:0000315"/>
    <property type="project" value="UniProtKB"/>
</dbReference>
<dbReference type="GO" id="GO:0050769">
    <property type="term" value="P:positive regulation of neurogenesis"/>
    <property type="evidence" value="ECO:0000315"/>
    <property type="project" value="CACAO"/>
</dbReference>
<dbReference type="GO" id="GO:0031053">
    <property type="term" value="P:primary miRNA processing"/>
    <property type="evidence" value="ECO:0000315"/>
    <property type="project" value="UniProtKB"/>
</dbReference>
<dbReference type="GO" id="GO:0006355">
    <property type="term" value="P:regulation of DNA-templated transcription"/>
    <property type="evidence" value="ECO:0000314"/>
    <property type="project" value="UniProtKB"/>
</dbReference>
<dbReference type="FunFam" id="3.30.70.330:FF:000593">
    <property type="entry name" value="Serrate RNA effector molecule homolog"/>
    <property type="match status" value="1"/>
</dbReference>
<dbReference type="InterPro" id="IPR035979">
    <property type="entry name" value="RBD_domain_sf"/>
</dbReference>
<dbReference type="InterPro" id="IPR039727">
    <property type="entry name" value="SE/Ars2"/>
</dbReference>
<dbReference type="InterPro" id="IPR007042">
    <property type="entry name" value="SERRATE/Ars2_C"/>
</dbReference>
<dbReference type="InterPro" id="IPR021933">
    <property type="entry name" value="SERRATE/Ars2_N"/>
</dbReference>
<dbReference type="PANTHER" id="PTHR13165">
    <property type="entry name" value="ARSENITE-RESISTANCE PROTEIN 2"/>
    <property type="match status" value="1"/>
</dbReference>
<dbReference type="PANTHER" id="PTHR13165:SF0">
    <property type="entry name" value="SERRATE RNA EFFECTOR MOLECULE HOMOLOG"/>
    <property type="match status" value="1"/>
</dbReference>
<dbReference type="Pfam" id="PF04959">
    <property type="entry name" value="ARS2"/>
    <property type="match status" value="1"/>
</dbReference>
<dbReference type="Pfam" id="PF12066">
    <property type="entry name" value="SERRATE_Ars2_N"/>
    <property type="match status" value="1"/>
</dbReference>
<dbReference type="SUPFAM" id="SSF54928">
    <property type="entry name" value="RNA-binding domain, RBD"/>
    <property type="match status" value="1"/>
</dbReference>
<protein>
    <recommendedName>
        <fullName>Serrate RNA effector molecule homolog</fullName>
    </recommendedName>
    <alternativeName>
        <fullName>Arsenite-resistance protein 2</fullName>
    </alternativeName>
</protein>
<organism>
    <name type="scientific">Mus musculus</name>
    <name type="common">Mouse</name>
    <dbReference type="NCBI Taxonomy" id="10090"/>
    <lineage>
        <taxon>Eukaryota</taxon>
        <taxon>Metazoa</taxon>
        <taxon>Chordata</taxon>
        <taxon>Craniata</taxon>
        <taxon>Vertebrata</taxon>
        <taxon>Euteleostomi</taxon>
        <taxon>Mammalia</taxon>
        <taxon>Eutheria</taxon>
        <taxon>Euarchontoglires</taxon>
        <taxon>Glires</taxon>
        <taxon>Rodentia</taxon>
        <taxon>Myomorpha</taxon>
        <taxon>Muroidea</taxon>
        <taxon>Muridae</taxon>
        <taxon>Murinae</taxon>
        <taxon>Mus</taxon>
        <taxon>Mus</taxon>
    </lineage>
</organism>
<keyword id="KW-0007">Acetylation</keyword>
<keyword id="KW-0010">Activator</keyword>
<keyword id="KW-0025">Alternative splicing</keyword>
<keyword id="KW-0963">Cytoplasm</keyword>
<keyword id="KW-1017">Isopeptide bond</keyword>
<keyword id="KW-0488">Methylation</keyword>
<keyword id="KW-0539">Nucleus</keyword>
<keyword id="KW-0597">Phosphoprotein</keyword>
<keyword id="KW-1185">Reference proteome</keyword>
<keyword id="KW-0943">RNA-mediated gene silencing</keyword>
<keyword id="KW-0804">Transcription</keyword>
<keyword id="KW-0805">Transcription regulation</keyword>
<keyword id="KW-0832">Ubl conjugation</keyword>
<sequence>MGDSDDEYDRRRRDKFRRERSDYDRSRERDERRRGDDWNDREWDRGRERRSRGEYRDYDRNRRERFSPPRHELSPPQKRMRRDWDEHSSDPYHSGYDMPYAGGGGGPTYGPPQPWGHPDVHIMQHHVLPIQARLGSIAEIDLGVPPPIMKSFKEFLLSLDDSVDETEAVKRYNDYKLDFRRQQMQDFFLAHKDEEWFRSKYHPDEVGKRRQEARGALQNRLKVFLSLMESGWFDNLLLDIDKADAIVKMLDAAVIKMEGGTENDLRILEQEEEEEQAGKTGEASKKEEARAGPALGEGERKANDKDEKKEDGKQAENDSSNDDKTKKSEGDGDKEEKKEEAEKEAKKSKKRNRKQSGDDSFDEGSVSESESESEGGQAEEEKEEAEEALKEKEKPKEEEKEKPKDAAGLECKPRPLHKTCSLFMRNIAPNISRAEIISLCKRYPGFMRVALSEPQPERRFFRRGWVTFDRSVNIKEICWNLQNIRLRECELSPGVNRDLTRRVRNINGITQHKQIVRNDIKLAAKLIHTLDDRTQLWASEPGTPPVPTSLPSQNPILKNITDYLIEEVSAEEEELLGSSGGPPPEEPPKEGNPAEINVERDEKLIKVLDKLLLYLRIVHSLDYYNTCEYPNEDEMPNRCGIIHVRGPMPPNRISHGEVLEWQKTFEEKLTPLLSVRESLSEEEAQKMGRKDPEQEVEKFVTSNTQELGKDKWLCPLSGKKFKGPEFVRKHIFNKHAEKIEEVKKEVAFFNNFLTDAKRPALPEIKPAQPPGPAQILPPGLTPGLPYPHQTPQGLMPYGQPRPPILGYGAGAVRPAVPTGGPPYPHAPYGAGRGNYDAFRGQGGYPGKPRNRMVRGDPRAIVEYRDLDAPDDVDFF</sequence>
<feature type="initiator methionine" description="Removed" evidence="1">
    <location>
        <position position="1"/>
    </location>
</feature>
<feature type="chain" id="PRO_0000220966" description="Serrate RNA effector molecule homolog">
    <location>
        <begin position="2"/>
        <end position="875"/>
    </location>
</feature>
<feature type="region of interest" description="Disordered" evidence="2">
    <location>
        <begin position="1"/>
        <end position="90"/>
    </location>
</feature>
<feature type="region of interest" description="Disordered" evidence="2">
    <location>
        <begin position="272"/>
        <end position="411"/>
    </location>
</feature>
<feature type="region of interest" description="Disordered" evidence="2">
    <location>
        <begin position="571"/>
        <end position="597"/>
    </location>
</feature>
<feature type="region of interest" description="Disordered" evidence="2">
    <location>
        <begin position="834"/>
        <end position="853"/>
    </location>
</feature>
<feature type="compositionally biased region" description="Basic and acidic residues" evidence="2">
    <location>
        <begin position="8"/>
        <end position="73"/>
    </location>
</feature>
<feature type="compositionally biased region" description="Basic and acidic residues" evidence="2">
    <location>
        <begin position="297"/>
        <end position="345"/>
    </location>
</feature>
<feature type="compositionally biased region" description="Acidic residues" evidence="2">
    <location>
        <begin position="369"/>
        <end position="386"/>
    </location>
</feature>
<feature type="compositionally biased region" description="Basic and acidic residues" evidence="2">
    <location>
        <begin position="387"/>
        <end position="411"/>
    </location>
</feature>
<feature type="modified residue" description="N-acetylglycine" evidence="1">
    <location>
        <position position="2"/>
    </location>
</feature>
<feature type="modified residue" description="Phosphoserine" evidence="1">
    <location>
        <position position="4"/>
    </location>
</feature>
<feature type="modified residue" description="Phosphotyrosine" evidence="1">
    <location>
        <position position="8"/>
    </location>
</feature>
<feature type="modified residue" description="Phosphoserine" evidence="1">
    <location>
        <position position="67"/>
    </location>
</feature>
<feature type="modified residue" description="Phosphoserine" evidence="1">
    <location>
        <position position="74"/>
    </location>
</feature>
<feature type="modified residue" description="Phosphoserine" evidence="1">
    <location>
        <position position="136"/>
    </location>
</feature>
<feature type="modified residue" description="Phosphoserine" evidence="1">
    <location>
        <position position="492"/>
    </location>
</feature>
<feature type="modified residue" description="Phosphoserine" evidence="1">
    <location>
        <position position="539"/>
    </location>
</feature>
<feature type="modified residue" description="Phosphothreonine" evidence="9 10 11">
    <location>
        <position position="543"/>
    </location>
</feature>
<feature type="modified residue" description="Phosphoserine" evidence="1">
    <location>
        <position position="569"/>
    </location>
</feature>
<feature type="modified residue" description="Phosphothreonine" evidence="1">
    <location>
        <position position="670"/>
    </location>
</feature>
<feature type="modified residue" description="Phosphoserine" evidence="1">
    <location>
        <position position="678"/>
    </location>
</feature>
<feature type="modified residue" description="Omega-N-methylarginine" evidence="1">
    <location>
        <position position="832"/>
    </location>
</feature>
<feature type="modified residue" description="Omega-N-methylarginine" evidence="1">
    <location>
        <position position="839"/>
    </location>
</feature>
<feature type="modified residue" description="Omega-N-methylarginine" evidence="1">
    <location>
        <position position="849"/>
    </location>
</feature>
<feature type="cross-link" description="Glycyl lysine isopeptide (Lys-Gly) (interchain with G-Cter in SUMO2)" evidence="1">
    <location>
        <position position="150"/>
    </location>
</feature>
<feature type="splice variant" id="VSP_000325" description="In isoform B and isoform C." evidence="7">
    <original>ILPPG</original>
    <variation>S</variation>
    <location>
        <begin position="775"/>
        <end position="779"/>
    </location>
</feature>
<feature type="splice variant" id="VSP_000326" description="In isoform C and isoform D." evidence="6 7">
    <location>
        <begin position="809"/>
        <end position="815"/>
    </location>
</feature>
<feature type="sequence conflict" description="In Ref. 3; BAE29458." evidence="8" ref="3">
    <original>E</original>
    <variation>G</variation>
    <location>
        <position position="567"/>
    </location>
</feature>
<gene>
    <name type="primary">Srrt</name>
    <name type="synonym">Ars2</name>
    <name type="synonym">Asr2</name>
</gene>
<reference key="1">
    <citation type="journal article" date="2001" name="Nucleic Acids Res.">
        <title>Comparative analysis of the gene-dense ACHE/TFR2 region on human chromosome 7q22 with the orthologous region on mouse chromosome 5.</title>
        <authorList>
            <person name="Wilson M.D."/>
            <person name="Riemer C."/>
            <person name="Martindale D.W."/>
            <person name="Schnupf P."/>
            <person name="Boright A.P."/>
            <person name="Cheung T.L."/>
            <person name="Hardy D.M."/>
            <person name="Schwartz S."/>
            <person name="Scherer S.W."/>
            <person name="Tsui L.-C."/>
            <person name="Miller W."/>
            <person name="Koop B.F."/>
        </authorList>
    </citation>
    <scope>NUCLEOTIDE SEQUENCE [GENOMIC DNA]</scope>
    <scope>ALTERNATIVE SPLICING (ISOFORMS A; B; C AND D)</scope>
    <source>
        <strain>129/Sv</strain>
    </source>
</reference>
<reference key="2">
    <citation type="journal article" date="2004" name="Genome Res.">
        <title>The status, quality, and expansion of the NIH full-length cDNA project: the Mammalian Gene Collection (MGC).</title>
        <authorList>
            <consortium name="The MGC Project Team"/>
        </authorList>
    </citation>
    <scope>NUCLEOTIDE SEQUENCE [LARGE SCALE MRNA] (ISOFORM D)</scope>
    <source>
        <strain>C57BL/6J</strain>
        <strain>FVB/N</strain>
        <tissue>Kidney</tissue>
        <tissue>Mammary tumor</tissue>
    </source>
</reference>
<reference key="3">
    <citation type="journal article" date="2005" name="Science">
        <title>The transcriptional landscape of the mammalian genome.</title>
        <authorList>
            <person name="Carninci P."/>
            <person name="Kasukawa T."/>
            <person name="Katayama S."/>
            <person name="Gough J."/>
            <person name="Frith M.C."/>
            <person name="Maeda N."/>
            <person name="Oyama R."/>
            <person name="Ravasi T."/>
            <person name="Lenhard B."/>
            <person name="Wells C."/>
            <person name="Kodzius R."/>
            <person name="Shimokawa K."/>
            <person name="Bajic V.B."/>
            <person name="Brenner S.E."/>
            <person name="Batalov S."/>
            <person name="Forrest A.R."/>
            <person name="Zavolan M."/>
            <person name="Davis M.J."/>
            <person name="Wilming L.G."/>
            <person name="Aidinis V."/>
            <person name="Allen J.E."/>
            <person name="Ambesi-Impiombato A."/>
            <person name="Apweiler R."/>
            <person name="Aturaliya R.N."/>
            <person name="Bailey T.L."/>
            <person name="Bansal M."/>
            <person name="Baxter L."/>
            <person name="Beisel K.W."/>
            <person name="Bersano T."/>
            <person name="Bono H."/>
            <person name="Chalk A.M."/>
            <person name="Chiu K.P."/>
            <person name="Choudhary V."/>
            <person name="Christoffels A."/>
            <person name="Clutterbuck D.R."/>
            <person name="Crowe M.L."/>
            <person name="Dalla E."/>
            <person name="Dalrymple B.P."/>
            <person name="de Bono B."/>
            <person name="Della Gatta G."/>
            <person name="di Bernardo D."/>
            <person name="Down T."/>
            <person name="Engstrom P."/>
            <person name="Fagiolini M."/>
            <person name="Faulkner G."/>
            <person name="Fletcher C.F."/>
            <person name="Fukushima T."/>
            <person name="Furuno M."/>
            <person name="Futaki S."/>
            <person name="Gariboldi M."/>
            <person name="Georgii-Hemming P."/>
            <person name="Gingeras T.R."/>
            <person name="Gojobori T."/>
            <person name="Green R.E."/>
            <person name="Gustincich S."/>
            <person name="Harbers M."/>
            <person name="Hayashi Y."/>
            <person name="Hensch T.K."/>
            <person name="Hirokawa N."/>
            <person name="Hill D."/>
            <person name="Huminiecki L."/>
            <person name="Iacono M."/>
            <person name="Ikeo K."/>
            <person name="Iwama A."/>
            <person name="Ishikawa T."/>
            <person name="Jakt M."/>
            <person name="Kanapin A."/>
            <person name="Katoh M."/>
            <person name="Kawasawa Y."/>
            <person name="Kelso J."/>
            <person name="Kitamura H."/>
            <person name="Kitano H."/>
            <person name="Kollias G."/>
            <person name="Krishnan S.P."/>
            <person name="Kruger A."/>
            <person name="Kummerfeld S.K."/>
            <person name="Kurochkin I.V."/>
            <person name="Lareau L.F."/>
            <person name="Lazarevic D."/>
            <person name="Lipovich L."/>
            <person name="Liu J."/>
            <person name="Liuni S."/>
            <person name="McWilliam S."/>
            <person name="Madan Babu M."/>
            <person name="Madera M."/>
            <person name="Marchionni L."/>
            <person name="Matsuda H."/>
            <person name="Matsuzawa S."/>
            <person name="Miki H."/>
            <person name="Mignone F."/>
            <person name="Miyake S."/>
            <person name="Morris K."/>
            <person name="Mottagui-Tabar S."/>
            <person name="Mulder N."/>
            <person name="Nakano N."/>
            <person name="Nakauchi H."/>
            <person name="Ng P."/>
            <person name="Nilsson R."/>
            <person name="Nishiguchi S."/>
            <person name="Nishikawa S."/>
            <person name="Nori F."/>
            <person name="Ohara O."/>
            <person name="Okazaki Y."/>
            <person name="Orlando V."/>
            <person name="Pang K.C."/>
            <person name="Pavan W.J."/>
            <person name="Pavesi G."/>
            <person name="Pesole G."/>
            <person name="Petrovsky N."/>
            <person name="Piazza S."/>
            <person name="Reed J."/>
            <person name="Reid J.F."/>
            <person name="Ring B.Z."/>
            <person name="Ringwald M."/>
            <person name="Rost B."/>
            <person name="Ruan Y."/>
            <person name="Salzberg S.L."/>
            <person name="Sandelin A."/>
            <person name="Schneider C."/>
            <person name="Schoenbach C."/>
            <person name="Sekiguchi K."/>
            <person name="Semple C.A."/>
            <person name="Seno S."/>
            <person name="Sessa L."/>
            <person name="Sheng Y."/>
            <person name="Shibata Y."/>
            <person name="Shimada H."/>
            <person name="Shimada K."/>
            <person name="Silva D."/>
            <person name="Sinclair B."/>
            <person name="Sperling S."/>
            <person name="Stupka E."/>
            <person name="Sugiura K."/>
            <person name="Sultana R."/>
            <person name="Takenaka Y."/>
            <person name="Taki K."/>
            <person name="Tammoja K."/>
            <person name="Tan S.L."/>
            <person name="Tang S."/>
            <person name="Taylor M.S."/>
            <person name="Tegner J."/>
            <person name="Teichmann S.A."/>
            <person name="Ueda H.R."/>
            <person name="van Nimwegen E."/>
            <person name="Verardo R."/>
            <person name="Wei C.L."/>
            <person name="Yagi K."/>
            <person name="Yamanishi H."/>
            <person name="Zabarovsky E."/>
            <person name="Zhu S."/>
            <person name="Zimmer A."/>
            <person name="Hide W."/>
            <person name="Bult C."/>
            <person name="Grimmond S.M."/>
            <person name="Teasdale R.D."/>
            <person name="Liu E.T."/>
            <person name="Brusic V."/>
            <person name="Quackenbush J."/>
            <person name="Wahlestedt C."/>
            <person name="Mattick J.S."/>
            <person name="Hume D.A."/>
            <person name="Kai C."/>
            <person name="Sasaki D."/>
            <person name="Tomaru Y."/>
            <person name="Fukuda S."/>
            <person name="Kanamori-Katayama M."/>
            <person name="Suzuki M."/>
            <person name="Aoki J."/>
            <person name="Arakawa T."/>
            <person name="Iida J."/>
            <person name="Imamura K."/>
            <person name="Itoh M."/>
            <person name="Kato T."/>
            <person name="Kawaji H."/>
            <person name="Kawagashira N."/>
            <person name="Kawashima T."/>
            <person name="Kojima M."/>
            <person name="Kondo S."/>
            <person name="Konno H."/>
            <person name="Nakano K."/>
            <person name="Ninomiya N."/>
            <person name="Nishio T."/>
            <person name="Okada M."/>
            <person name="Plessy C."/>
            <person name="Shibata K."/>
            <person name="Shiraki T."/>
            <person name="Suzuki S."/>
            <person name="Tagami M."/>
            <person name="Waki K."/>
            <person name="Watahiki A."/>
            <person name="Okamura-Oho Y."/>
            <person name="Suzuki H."/>
            <person name="Kawai J."/>
            <person name="Hayashizaki Y."/>
        </authorList>
    </citation>
    <scope>NUCLEOTIDE SEQUENCE [LARGE SCALE MRNA] OF 477-875 (ISOFORM C)</scope>
    <source>
        <strain>C57BL/6J</strain>
        <tissue>Bone marrow</tissue>
    </source>
</reference>
<reference key="4">
    <citation type="journal article" date="2004" name="Mol. Cell. Proteomics">
        <title>Phosphoproteomic analysis of the developing mouse brain.</title>
        <authorList>
            <person name="Ballif B.A."/>
            <person name="Villen J."/>
            <person name="Beausoleil S.A."/>
            <person name="Schwartz D."/>
            <person name="Gygi S.P."/>
        </authorList>
    </citation>
    <scope>PHOSPHORYLATION [LARGE SCALE ANALYSIS] AT THR-543</scope>
    <scope>IDENTIFICATION BY MASS SPECTROMETRY [LARGE SCALE ANALYSIS]</scope>
    <source>
        <tissue>Embryonic brain</tissue>
    </source>
</reference>
<reference key="5">
    <citation type="journal article" date="2008" name="Mol. Cell. Biol.">
        <title>ARS2 is a conserved eukaryotic gene essential for early mammalian development.</title>
        <authorList>
            <person name="Wilson M.D."/>
            <person name="Wang D."/>
            <person name="Wagner R."/>
            <person name="Breyssens H."/>
            <person name="Gertsenstein M."/>
            <person name="Lobe C."/>
            <person name="Lu X."/>
            <person name="Nagy A."/>
            <person name="Burke R.D."/>
            <person name="Koop B.F."/>
            <person name="Howard P.L."/>
        </authorList>
    </citation>
    <scope>SUBCELLULAR LOCATION</scope>
    <scope>TISSUE SPECIFICITY</scope>
    <scope>DISRUPTION PHENOTYPE</scope>
</reference>
<reference key="6">
    <citation type="journal article" date="2009" name="Cell">
        <title>Ars2 links the nuclear cap-binding complex to RNA interference and cell proliferation.</title>
        <authorList>
            <person name="Gruber J.J."/>
            <person name="Zatechka D.S."/>
            <person name="Sabin L.R."/>
            <person name="Yong J."/>
            <person name="Lum J.J."/>
            <person name="Kong M."/>
            <person name="Zong W.-X."/>
            <person name="Zhang Z."/>
            <person name="Lau C.-K."/>
            <person name="Rawlings J."/>
            <person name="Cherry S."/>
            <person name="Ihle J.N."/>
            <person name="Dreyfuss G."/>
            <person name="Thompson C.B."/>
        </authorList>
    </citation>
    <scope>FUNCTION</scope>
    <scope>SUBCELLULAR LOCATION</scope>
    <scope>TISSUE SPECIFICITY</scope>
    <scope>INDUCTION</scope>
    <scope>INTERACTION WITH NCBP1 AND DROSHA</scope>
    <scope>DISRUPTION PHENOTYPE</scope>
</reference>
<reference key="7">
    <citation type="journal article" date="2009" name="Mol. Cell. Proteomics">
        <title>Large scale localization of protein phosphorylation by use of electron capture dissociation mass spectrometry.</title>
        <authorList>
            <person name="Sweet S.M."/>
            <person name="Bailey C.M."/>
            <person name="Cunningham D.L."/>
            <person name="Heath J.K."/>
            <person name="Cooper H.J."/>
        </authorList>
    </citation>
    <scope>PHOSPHORYLATION [LARGE SCALE ANALYSIS] AT THR-543</scope>
    <scope>IDENTIFICATION BY MASS SPECTROMETRY [LARGE SCALE ANALYSIS]</scope>
    <source>
        <tissue>Embryonic fibroblast</tissue>
    </source>
</reference>
<reference key="8">
    <citation type="journal article" date="2010" name="Cell">
        <title>A tissue-specific atlas of mouse protein phosphorylation and expression.</title>
        <authorList>
            <person name="Huttlin E.L."/>
            <person name="Jedrychowski M.P."/>
            <person name="Elias J.E."/>
            <person name="Goswami T."/>
            <person name="Rad R."/>
            <person name="Beausoleil S.A."/>
            <person name="Villen J."/>
            <person name="Haas W."/>
            <person name="Sowa M.E."/>
            <person name="Gygi S.P."/>
        </authorList>
    </citation>
    <scope>PHOSPHORYLATION [LARGE SCALE ANALYSIS] AT THR-543</scope>
    <scope>IDENTIFICATION BY MASS SPECTROMETRY [LARGE SCALE ANALYSIS]</scope>
    <source>
        <tissue>Brain</tissue>
        <tissue>Brown adipose tissue</tissue>
        <tissue>Heart</tissue>
        <tissue>Kidney</tissue>
        <tissue>Liver</tissue>
        <tissue>Lung</tissue>
        <tissue>Pancreas</tissue>
        <tissue>Spleen</tissue>
        <tissue>Testis</tissue>
    </source>
</reference>
<reference key="9">
    <citation type="journal article" date="2012" name="Nature">
        <title>Ars2 maintains neural stem-cell identity through direct transcriptional activation of Sox2.</title>
        <authorList>
            <person name="Andreu-Agullo C."/>
            <person name="Maurin T."/>
            <person name="Thompson C.B."/>
            <person name="Lai E.C."/>
        </authorList>
    </citation>
    <scope>FUNCTION</scope>
    <scope>TISSUE SPECIFICITY</scope>
</reference>
<name>SRRT_MOUSE</name>
<accession>Q99MR6</accession>
<accession>Q3UD04</accession>
<accession>Q5D042</accession>
<accession>Q8VEE6</accession>
<accession>Q99MR4</accession>
<accession>Q99MR5</accession>
<accession>Q99MR7</accession>
<evidence type="ECO:0000250" key="1">
    <source>
        <dbReference type="UniProtKB" id="Q9BXP5"/>
    </source>
</evidence>
<evidence type="ECO:0000256" key="2">
    <source>
        <dbReference type="SAM" id="MobiDB-lite"/>
    </source>
</evidence>
<evidence type="ECO:0000269" key="3">
    <source>
    </source>
</evidence>
<evidence type="ECO:0000269" key="4">
    <source>
    </source>
</evidence>
<evidence type="ECO:0000269" key="5">
    <source>
    </source>
</evidence>
<evidence type="ECO:0000303" key="6">
    <source>
    </source>
</evidence>
<evidence type="ECO:0000303" key="7">
    <source>
    </source>
</evidence>
<evidence type="ECO:0000305" key="8"/>
<evidence type="ECO:0007744" key="9">
    <source>
    </source>
</evidence>
<evidence type="ECO:0007744" key="10">
    <source>
    </source>
</evidence>
<evidence type="ECO:0007744" key="11">
    <source>
    </source>
</evidence>